<keyword id="KW-0007">Acetylation</keyword>
<keyword id="KW-0965">Cell junction</keyword>
<keyword id="KW-1003">Cell membrane</keyword>
<keyword id="KW-0868">Chloride</keyword>
<keyword id="KW-0869">Chloride channel</keyword>
<keyword id="KW-0963">Cytoplasm</keyword>
<keyword id="KW-0968">Cytoplasmic vesicle</keyword>
<keyword id="KW-0206">Cytoskeleton</keyword>
<keyword id="KW-0256">Endoplasmic reticulum</keyword>
<keyword id="KW-0407">Ion channel</keyword>
<keyword id="KW-0406">Ion transport</keyword>
<keyword id="KW-0472">Membrane</keyword>
<keyword id="KW-0496">Mitochondrion</keyword>
<keyword id="KW-0539">Nucleus</keyword>
<keyword id="KW-0560">Oxidoreductase</keyword>
<keyword id="KW-0597">Phosphoprotein</keyword>
<keyword id="KW-1185">Reference proteome</keyword>
<keyword id="KW-0812">Transmembrane</keyword>
<keyword id="KW-1133">Transmembrane helix</keyword>
<keyword id="KW-0813">Transport</keyword>
<keyword id="KW-0851">Voltage-gated channel</keyword>
<organism>
    <name type="scientific">Rattus norvegicus</name>
    <name type="common">Rat</name>
    <dbReference type="NCBI Taxonomy" id="10116"/>
    <lineage>
        <taxon>Eukaryota</taxon>
        <taxon>Metazoa</taxon>
        <taxon>Chordata</taxon>
        <taxon>Craniata</taxon>
        <taxon>Vertebrata</taxon>
        <taxon>Euteleostomi</taxon>
        <taxon>Mammalia</taxon>
        <taxon>Eutheria</taxon>
        <taxon>Euarchontoglires</taxon>
        <taxon>Glires</taxon>
        <taxon>Rodentia</taxon>
        <taxon>Myomorpha</taxon>
        <taxon>Muroidea</taxon>
        <taxon>Muridae</taxon>
        <taxon>Murinae</taxon>
        <taxon>Rattus</taxon>
    </lineage>
</organism>
<comment type="function">
    <text evidence="4 7 8 10">In the soluble state, catalyzes glutaredoxin-like thiol disulfide exchange reactions with reduced glutathione as electron donor (By similarity). Can insert into membranes and form voltage-dependent multi-ion conductive channels. Membrane insertion seems to be redox-regulated and may occur only under oxidizing conditions (PubMed:17453412, PubMed:9295337). Has alternate cellular functions like a potential role in angiogenesis or in maintaining apical-basolateral membrane polarity during mitosis and cytokinesis. Could also promote endothelial cell proliferation and regulate endothelial morphogenesis (tubulogenesis). Promotes cell-surface expression of HRH3.</text>
</comment>
<comment type="catalytic activity">
    <reaction evidence="7 10">
        <text>chloride(in) = chloride(out)</text>
        <dbReference type="Rhea" id="RHEA:29823"/>
        <dbReference type="ChEBI" id="CHEBI:17996"/>
    </reaction>
</comment>
<comment type="catalytic activity">
    <reaction evidence="7">
        <text>thiocyanate(in) = thiocyanate(out)</text>
        <dbReference type="Rhea" id="RHEA:75347"/>
        <dbReference type="ChEBI" id="CHEBI:18022"/>
    </reaction>
</comment>
<comment type="catalytic activity">
    <reaction evidence="7">
        <text>nitrate(in) = nitrate(out)</text>
        <dbReference type="Rhea" id="RHEA:34923"/>
        <dbReference type="ChEBI" id="CHEBI:17632"/>
    </reaction>
</comment>
<comment type="catalytic activity">
    <reaction evidence="7">
        <text>iodide(out) = iodide(in)</text>
        <dbReference type="Rhea" id="RHEA:66324"/>
        <dbReference type="ChEBI" id="CHEBI:16382"/>
    </reaction>
</comment>
<comment type="catalytic activity">
    <reaction evidence="7">
        <text>bromide(in) = bromide(out)</text>
        <dbReference type="Rhea" id="RHEA:75383"/>
        <dbReference type="ChEBI" id="CHEBI:15858"/>
    </reaction>
</comment>
<comment type="catalytic activity">
    <reaction evidence="7">
        <text>fluoride(in) = fluoride(out)</text>
        <dbReference type="Rhea" id="RHEA:76159"/>
        <dbReference type="ChEBI" id="CHEBI:17051"/>
    </reaction>
</comment>
<comment type="catalytic activity">
    <reaction evidence="10">
        <text>choline(out) = choline(in)</text>
        <dbReference type="Rhea" id="RHEA:32751"/>
        <dbReference type="ChEBI" id="CHEBI:15354"/>
    </reaction>
</comment>
<comment type="activity regulation">
    <text evidence="7">Channel activity is redox- and pH-regulated. Anion vs cation selectivity is enhanced when fully oxidized.</text>
</comment>
<comment type="subunit">
    <text evidence="1 8">Monomer (By similarity). Interacts with HRH3.</text>
</comment>
<comment type="subcellular location">
    <subcellularLocation>
        <location evidence="4">Cytoplasm</location>
        <location evidence="4">Cytoskeleton</location>
        <location evidence="4">Microtubule organizing center</location>
        <location evidence="4">Centrosome</location>
    </subcellularLocation>
    <subcellularLocation>
        <location evidence="4">Cytoplasmic vesicle membrane</location>
        <topology evidence="4">Single-pass membrane protein</topology>
    </subcellularLocation>
    <subcellularLocation>
        <location evidence="4">Nucleus</location>
    </subcellularLocation>
    <subcellularLocation>
        <location evidence="4">Cell membrane</location>
        <topology evidence="4">Single-pass membrane protein</topology>
    </subcellularLocation>
    <subcellularLocation>
        <location evidence="9">Mitochondrion</location>
    </subcellularLocation>
    <subcellularLocation>
        <location evidence="4">Cell junction</location>
    </subcellularLocation>
    <subcellularLocation>
        <location evidence="10">Endoplasmic reticulum membrane</location>
        <topology evidence="12">Single-pass membrane protein</topology>
    </subcellularLocation>
    <text evidence="4 9">Colocalized with AKAP9 at the centrosome and midbody. Exists both as soluble cytoplasmic protein and as membrane protein with probably a single transmembrane domain. Present in an intracellular vesicular compartment that likely represent trans-Golgi network vesicles. Might not be present in the nucleus of cardiac cells.</text>
</comment>
<comment type="tissue specificity">
    <text evidence="8 9 10">Detected in brain, in cell bodies and dendrites of Purkinje cells in cerebellar neurons (at protein level) (PubMed:18302930). Expressed neonatal and adult cardiomyocytes (at protein level) (PubMed:26777142). Marked expression was found in hippocampus and cerebellum, and in many other tissues (PubMed:18302930, PubMed:9295337).</text>
</comment>
<comment type="domain">
    <text evidence="4">The active G-site contains a monothiol Cys-X-X-Ser motif which mediates glutathione-dependent redox catalysis.</text>
</comment>
<comment type="domain">
    <text evidence="4">Members of this family may change from a globular, soluble state to a state where the N-terminal domain is inserted into the membrane and functions as a chloride channel. The redox status of the active cysteine in Cys-X-X-Cys/Ser motif likely determines the capacity to adopt a soluble or membrane-inserted state. A conformation change of the N-terminal domain is thought to expose hydrophobic surfaces that trigger membrane insertion.</text>
</comment>
<comment type="similarity">
    <text evidence="11">Belongs to the chloride channel CLIC family.</text>
</comment>
<proteinExistence type="evidence at protein level"/>
<reference key="1">
    <citation type="journal article" date="1997" name="J. Biol. Chem.">
        <title>Rat brain p64H1, expression of a new member of the p64 chloride channel protein family in endoplasmic reticulum.</title>
        <authorList>
            <person name="Duncan R.R."/>
            <person name="Westwood P.K."/>
            <person name="Boyd A."/>
            <person name="Ashley R.H."/>
        </authorList>
    </citation>
    <scope>NUCLEOTIDE SEQUENCE [MRNA]</scope>
    <scope>FUNCTION</scope>
    <scope>TRANSPORTER ACTIVITY</scope>
    <scope>SUBCELLULAR LOCATION</scope>
    <scope>TISSUE SPECIFICITY</scope>
    <source>
        <tissue>Brain</tissue>
    </source>
</reference>
<reference key="2">
    <citation type="journal article" date="2007" name="Mol. Membr. Biol.">
        <title>CLIC4 (p64H1) and its putative transmembrane domain form poorly selective, redox-regulated ion channels.</title>
        <authorList>
            <person name="Singh H."/>
            <person name="Ashley R.H."/>
        </authorList>
    </citation>
    <scope>FUNCTION</scope>
    <scope>TRANSPORTER ACTIVITY</scope>
    <scope>ACTIVITY REGULATION</scope>
    <scope>SUBCELLULAR LOCATION</scope>
    <scope>DOMAIN</scope>
</reference>
<reference key="3">
    <citation type="journal article" date="2008" name="Biochem. Biophys. Res. Commun.">
        <title>CLIC4 interacts with histamine H3 receptor and enhances the receptor cell surface expression.</title>
        <authorList>
            <person name="Maeda K."/>
            <person name="Haraguchi M."/>
            <person name="Kuramasu A."/>
            <person name="Sato T."/>
            <person name="Ariake K."/>
            <person name="Sakagami H."/>
            <person name="Kondo H."/>
            <person name="Yanai K."/>
            <person name="Fukunaga K."/>
            <person name="Yanagisawa T."/>
            <person name="Sukegawa J."/>
        </authorList>
    </citation>
    <scope>FUNCTION</scope>
    <scope>INTERACTION WITH HRH3</scope>
    <scope>SUBCELLULAR LOCATION</scope>
    <scope>TISSUE SPECIFICITY</scope>
</reference>
<reference evidence="11" key="4">
    <citation type="journal article" date="2016" name="Mitochondrion">
        <title>Molecular identity of cardiac mitochondrial chloride intracellular channel proteins.</title>
        <authorList>
            <person name="Ponnalagu D."/>
            <person name="Gururaja Rao S."/>
            <person name="Farber J."/>
            <person name="Xin W."/>
            <person name="Hussain A.T."/>
            <person name="Shah K."/>
            <person name="Tanda S."/>
            <person name="Berryman M."/>
            <person name="Edwards J.C."/>
            <person name="Singh H."/>
        </authorList>
    </citation>
    <scope>SUBCELLULAR LOCATION</scope>
    <scope>TISSUE SPECIFICITY</scope>
</reference>
<dbReference type="EC" id="1.8.-.-" evidence="4"/>
<dbReference type="EMBL" id="AF104119">
    <property type="protein sequence ID" value="AAD16875.1"/>
    <property type="molecule type" value="mRNA"/>
</dbReference>
<dbReference type="PIR" id="S70484">
    <property type="entry name" value="S70484"/>
</dbReference>
<dbReference type="RefSeq" id="NP_114006.1">
    <property type="nucleotide sequence ID" value="NM_031818.1"/>
</dbReference>
<dbReference type="SMR" id="Q9Z0W7"/>
<dbReference type="BioGRID" id="249813">
    <property type="interactions" value="6"/>
</dbReference>
<dbReference type="CORUM" id="Q9Z0W7"/>
<dbReference type="FunCoup" id="Q9Z0W7">
    <property type="interactions" value="2662"/>
</dbReference>
<dbReference type="STRING" id="10116.ENSRNOP00000024464"/>
<dbReference type="iPTMnet" id="Q9Z0W7"/>
<dbReference type="PhosphoSitePlus" id="Q9Z0W7"/>
<dbReference type="SwissPalm" id="Q9Z0W7"/>
<dbReference type="jPOST" id="Q9Z0W7"/>
<dbReference type="PaxDb" id="10116-ENSRNOP00000024464"/>
<dbReference type="GeneID" id="83718"/>
<dbReference type="KEGG" id="rno:83718"/>
<dbReference type="AGR" id="RGD:61857"/>
<dbReference type="CTD" id="25932"/>
<dbReference type="RGD" id="61857">
    <property type="gene designation" value="Clic4"/>
</dbReference>
<dbReference type="eggNOG" id="KOG1422">
    <property type="taxonomic scope" value="Eukaryota"/>
</dbReference>
<dbReference type="InParanoid" id="Q9Z0W7"/>
<dbReference type="PhylomeDB" id="Q9Z0W7"/>
<dbReference type="PRO" id="PR:Q9Z0W7"/>
<dbReference type="Proteomes" id="UP000002494">
    <property type="component" value="Unplaced"/>
</dbReference>
<dbReference type="GO" id="GO:0045177">
    <property type="term" value="C:apical part of cell"/>
    <property type="evidence" value="ECO:0000266"/>
    <property type="project" value="RGD"/>
</dbReference>
<dbReference type="GO" id="GO:0009986">
    <property type="term" value="C:cell surface"/>
    <property type="evidence" value="ECO:0000266"/>
    <property type="project" value="RGD"/>
</dbReference>
<dbReference type="GO" id="GO:0005911">
    <property type="term" value="C:cell-cell junction"/>
    <property type="evidence" value="ECO:0000266"/>
    <property type="project" value="RGD"/>
</dbReference>
<dbReference type="GO" id="GO:0005813">
    <property type="term" value="C:centrosome"/>
    <property type="evidence" value="ECO:0000266"/>
    <property type="project" value="RGD"/>
</dbReference>
<dbReference type="GO" id="GO:0034707">
    <property type="term" value="C:chloride channel complex"/>
    <property type="evidence" value="ECO:0007669"/>
    <property type="project" value="UniProtKB-KW"/>
</dbReference>
<dbReference type="GO" id="GO:0005737">
    <property type="term" value="C:cytoplasm"/>
    <property type="evidence" value="ECO:0000250"/>
    <property type="project" value="UniProtKB"/>
</dbReference>
<dbReference type="GO" id="GO:0030659">
    <property type="term" value="C:cytoplasmic vesicle membrane"/>
    <property type="evidence" value="ECO:0007669"/>
    <property type="project" value="UniProtKB-SubCell"/>
</dbReference>
<dbReference type="GO" id="GO:0005829">
    <property type="term" value="C:cytosol"/>
    <property type="evidence" value="ECO:0000266"/>
    <property type="project" value="RGD"/>
</dbReference>
<dbReference type="GO" id="GO:0005783">
    <property type="term" value="C:endoplasmic reticulum"/>
    <property type="evidence" value="ECO:0000304"/>
    <property type="project" value="UniProtKB"/>
</dbReference>
<dbReference type="GO" id="GO:0005789">
    <property type="term" value="C:endoplasmic reticulum membrane"/>
    <property type="evidence" value="ECO:0007669"/>
    <property type="project" value="UniProtKB-SubCell"/>
</dbReference>
<dbReference type="GO" id="GO:0016020">
    <property type="term" value="C:membrane"/>
    <property type="evidence" value="ECO:0000318"/>
    <property type="project" value="GO_Central"/>
</dbReference>
<dbReference type="GO" id="GO:0015630">
    <property type="term" value="C:microtubule cytoskeleton"/>
    <property type="evidence" value="ECO:0000266"/>
    <property type="project" value="RGD"/>
</dbReference>
<dbReference type="GO" id="GO:0005902">
    <property type="term" value="C:microvillus"/>
    <property type="evidence" value="ECO:0000266"/>
    <property type="project" value="RGD"/>
</dbReference>
<dbReference type="GO" id="GO:0030496">
    <property type="term" value="C:midbody"/>
    <property type="evidence" value="ECO:0000266"/>
    <property type="project" value="RGD"/>
</dbReference>
<dbReference type="GO" id="GO:0005741">
    <property type="term" value="C:mitochondrial outer membrane"/>
    <property type="evidence" value="ECO:0000314"/>
    <property type="project" value="FlyBase"/>
</dbReference>
<dbReference type="GO" id="GO:0005739">
    <property type="term" value="C:mitochondrion"/>
    <property type="evidence" value="ECO:0000266"/>
    <property type="project" value="RGD"/>
</dbReference>
<dbReference type="GO" id="GO:0016363">
    <property type="term" value="C:nuclear matrix"/>
    <property type="evidence" value="ECO:0000266"/>
    <property type="project" value="RGD"/>
</dbReference>
<dbReference type="GO" id="GO:0048471">
    <property type="term" value="C:perinuclear region of cytoplasm"/>
    <property type="evidence" value="ECO:0000266"/>
    <property type="project" value="RGD"/>
</dbReference>
<dbReference type="GO" id="GO:0005886">
    <property type="term" value="C:plasma membrane"/>
    <property type="evidence" value="ECO:0000266"/>
    <property type="project" value="RGD"/>
</dbReference>
<dbReference type="GO" id="GO:0031982">
    <property type="term" value="C:vesicle"/>
    <property type="evidence" value="ECO:0000304"/>
    <property type="project" value="UniProtKB"/>
</dbReference>
<dbReference type="GO" id="GO:0005254">
    <property type="term" value="F:chloride channel activity"/>
    <property type="evidence" value="ECO:0000314"/>
    <property type="project" value="RGD"/>
</dbReference>
<dbReference type="GO" id="GO:0016491">
    <property type="term" value="F:oxidoreductase activity"/>
    <property type="evidence" value="ECO:0007669"/>
    <property type="project" value="UniProtKB-KW"/>
</dbReference>
<dbReference type="GO" id="GO:0044877">
    <property type="term" value="F:protein-containing complex binding"/>
    <property type="evidence" value="ECO:0000353"/>
    <property type="project" value="RGD"/>
</dbReference>
<dbReference type="GO" id="GO:0001525">
    <property type="term" value="P:angiogenesis"/>
    <property type="evidence" value="ECO:0000266"/>
    <property type="project" value="RGD"/>
</dbReference>
<dbReference type="GO" id="GO:0048754">
    <property type="term" value="P:branching morphogenesis of an epithelial tube"/>
    <property type="evidence" value="ECO:0000266"/>
    <property type="project" value="RGD"/>
</dbReference>
<dbReference type="GO" id="GO:0071277">
    <property type="term" value="P:cellular response to calcium ion"/>
    <property type="evidence" value="ECO:0000266"/>
    <property type="project" value="RGD"/>
</dbReference>
<dbReference type="GO" id="GO:0006821">
    <property type="term" value="P:chloride transport"/>
    <property type="evidence" value="ECO:0000318"/>
    <property type="project" value="GO_Central"/>
</dbReference>
<dbReference type="GO" id="GO:0001886">
    <property type="term" value="P:endothelial cell morphogenesis"/>
    <property type="evidence" value="ECO:0000266"/>
    <property type="project" value="RGD"/>
</dbReference>
<dbReference type="GO" id="GO:0009566">
    <property type="term" value="P:fertilization"/>
    <property type="evidence" value="ECO:0000266"/>
    <property type="project" value="RGD"/>
</dbReference>
<dbReference type="GO" id="GO:0030216">
    <property type="term" value="P:keratinocyte differentiation"/>
    <property type="evidence" value="ECO:0000266"/>
    <property type="project" value="RGD"/>
</dbReference>
<dbReference type="GO" id="GO:0035264">
    <property type="term" value="P:multicellular organism growth"/>
    <property type="evidence" value="ECO:0000266"/>
    <property type="project" value="RGD"/>
</dbReference>
<dbReference type="GO" id="GO:0030336">
    <property type="term" value="P:negative regulation of cell migration"/>
    <property type="evidence" value="ECO:0000250"/>
    <property type="project" value="UniProtKB"/>
</dbReference>
<dbReference type="GO" id="GO:0061299">
    <property type="term" value="P:retina vasculature morphogenesis in camera-type eye"/>
    <property type="evidence" value="ECO:0000266"/>
    <property type="project" value="RGD"/>
</dbReference>
<dbReference type="GO" id="GO:0007035">
    <property type="term" value="P:vacuolar acidification"/>
    <property type="evidence" value="ECO:0000266"/>
    <property type="project" value="RGD"/>
</dbReference>
<dbReference type="CDD" id="cd03061">
    <property type="entry name" value="GST_N_CLIC"/>
    <property type="match status" value="1"/>
</dbReference>
<dbReference type="FunFam" id="1.20.1050.10:FF:000001">
    <property type="entry name" value="Chloride intracellular channel 2"/>
    <property type="match status" value="1"/>
</dbReference>
<dbReference type="FunFam" id="3.40.30.10:FF:000021">
    <property type="entry name" value="Chloride intracellular channel 4"/>
    <property type="match status" value="1"/>
</dbReference>
<dbReference type="Gene3D" id="1.20.1050.10">
    <property type="match status" value="1"/>
</dbReference>
<dbReference type="Gene3D" id="3.40.30.10">
    <property type="entry name" value="Glutaredoxin"/>
    <property type="match status" value="1"/>
</dbReference>
<dbReference type="InterPro" id="IPR002946">
    <property type="entry name" value="CLIC"/>
</dbReference>
<dbReference type="InterPro" id="IPR053823">
    <property type="entry name" value="CLIC_N"/>
</dbReference>
<dbReference type="InterPro" id="IPR010987">
    <property type="entry name" value="Glutathione-S-Trfase_C-like"/>
</dbReference>
<dbReference type="InterPro" id="IPR036282">
    <property type="entry name" value="Glutathione-S-Trfase_C_sf"/>
</dbReference>
<dbReference type="InterPro" id="IPR040079">
    <property type="entry name" value="Glutathione_S-Trfase"/>
</dbReference>
<dbReference type="InterPro" id="IPR036249">
    <property type="entry name" value="Thioredoxin-like_sf"/>
</dbReference>
<dbReference type="NCBIfam" id="TIGR00862">
    <property type="entry name" value="O-ClC"/>
    <property type="match status" value="1"/>
</dbReference>
<dbReference type="PANTHER" id="PTHR45476:SF5">
    <property type="entry name" value="CHLORIDE INTRACELLULAR CHANNEL 4-RELATED"/>
    <property type="match status" value="1"/>
</dbReference>
<dbReference type="PANTHER" id="PTHR45476">
    <property type="entry name" value="CHLORIDE INTRACELLULAR CHANNEL PROTEIN 6-RELATED"/>
    <property type="match status" value="1"/>
</dbReference>
<dbReference type="Pfam" id="PF22441">
    <property type="entry name" value="CLIC-like_N"/>
    <property type="match status" value="1"/>
</dbReference>
<dbReference type="Pfam" id="PF13410">
    <property type="entry name" value="GST_C_2"/>
    <property type="match status" value="1"/>
</dbReference>
<dbReference type="PRINTS" id="PR01263">
    <property type="entry name" value="INTCLCHANNEL"/>
</dbReference>
<dbReference type="SFLD" id="SFLDS00019">
    <property type="entry name" value="Glutathione_Transferase_(cytos"/>
    <property type="match status" value="1"/>
</dbReference>
<dbReference type="SFLD" id="SFLDG00358">
    <property type="entry name" value="Main_(cytGST)"/>
    <property type="match status" value="1"/>
</dbReference>
<dbReference type="SUPFAM" id="SSF47616">
    <property type="entry name" value="GST C-terminal domain-like"/>
    <property type="match status" value="1"/>
</dbReference>
<dbReference type="SUPFAM" id="SSF52833">
    <property type="entry name" value="Thioredoxin-like"/>
    <property type="match status" value="1"/>
</dbReference>
<dbReference type="PROSITE" id="PS50405">
    <property type="entry name" value="GST_CTER"/>
    <property type="match status" value="1"/>
</dbReference>
<name>CLIC4_RAT</name>
<protein>
    <recommendedName>
        <fullName>Chloride intracellular channel protein 4</fullName>
    </recommendedName>
    <alternativeName>
        <fullName evidence="4">Glutaredoxin-like oxidoreductase CLIC4</fullName>
        <ecNumber evidence="4">1.8.-.-</ecNumber>
    </alternativeName>
    <alternativeName>
        <fullName>Intracellular chloride ion channel protein p64H1</fullName>
    </alternativeName>
</protein>
<sequence length="253" mass="28633">MALSMPLNGLKEEDKEPLIELFVKAGSDGESIGNCPFSQRLFMILWLKGVVFSVTTVDLKRKPAHLQNLAPGTHPPFITFNSEVKTDVNKIEEFLEEVLCPPKYLKLSPKHPESNTAGMDIFAKFSAYIKNSRPEANEALERGLLKTLQKLDEYLNSPLPGEIDENSMEDIKSSTRRFLDGDEMTLADCNLLPKLHIVKVVAKKYRNFDIPKGMTGIWRYLTNAYSRDEFTNTCPSDKEVEIAYSDVAKRLTK</sequence>
<feature type="initiator methionine" description="Removed" evidence="4">
    <location>
        <position position="1"/>
    </location>
</feature>
<feature type="chain" id="PRO_0000144212" description="Chloride intracellular channel protein 4">
    <location>
        <begin position="2"/>
        <end position="253"/>
    </location>
</feature>
<feature type="transmembrane region" description="Helical; Note=After insertion into the membrane" evidence="12">
    <location>
        <begin position="37"/>
        <end position="57"/>
    </location>
</feature>
<feature type="domain" description="GST C-terminal" evidence="6">
    <location>
        <begin position="81"/>
        <end position="244"/>
    </location>
</feature>
<feature type="region of interest" description="Required for insertion into the membrane" evidence="1">
    <location>
        <begin position="2"/>
        <end position="101"/>
    </location>
</feature>
<feature type="short sequence motif" description="G-site" evidence="4">
    <location>
        <begin position="35"/>
        <end position="38"/>
    </location>
</feature>
<feature type="modified residue" description="N-acetylalanine" evidence="4">
    <location>
        <position position="2"/>
    </location>
</feature>
<feature type="modified residue" description="Phosphoserine" evidence="4">
    <location>
        <position position="4"/>
    </location>
</feature>
<feature type="modified residue" description="N6-acetyllysine" evidence="2">
    <location>
        <position position="24"/>
    </location>
</feature>
<feature type="modified residue" description="N6-acetyllysine" evidence="4">
    <location>
        <position position="130"/>
    </location>
</feature>
<feature type="modified residue" description="Phosphoserine" evidence="2">
    <location>
        <position position="132"/>
    </location>
</feature>
<feature type="modified residue" description="Phosphoserine" evidence="2">
    <location>
        <position position="167"/>
    </location>
</feature>
<feature type="modified residue" description="Phosphoserine" evidence="3">
    <location>
        <position position="236"/>
    </location>
</feature>
<feature type="modified residue" description="Phosphotyrosine" evidence="5">
    <location>
        <position position="244"/>
    </location>
</feature>
<accession>Q9Z0W7</accession>
<evidence type="ECO:0000250" key="1"/>
<evidence type="ECO:0000250" key="2">
    <source>
        <dbReference type="UniProtKB" id="O00299"/>
    </source>
</evidence>
<evidence type="ECO:0000250" key="3">
    <source>
        <dbReference type="UniProtKB" id="Q9QYB1"/>
    </source>
</evidence>
<evidence type="ECO:0000250" key="4">
    <source>
        <dbReference type="UniProtKB" id="Q9Y696"/>
    </source>
</evidence>
<evidence type="ECO:0000250" key="5">
    <source>
        <dbReference type="UniProtKB" id="Q9Z1Q5"/>
    </source>
</evidence>
<evidence type="ECO:0000255" key="6">
    <source>
        <dbReference type="PROSITE-ProRule" id="PRU00685"/>
    </source>
</evidence>
<evidence type="ECO:0000269" key="7">
    <source>
    </source>
</evidence>
<evidence type="ECO:0000269" key="8">
    <source>
    </source>
</evidence>
<evidence type="ECO:0000269" key="9">
    <source>
    </source>
</evidence>
<evidence type="ECO:0000269" key="10">
    <source>
    </source>
</evidence>
<evidence type="ECO:0000305" key="11"/>
<evidence type="ECO:0000305" key="12">
    <source>
    </source>
</evidence>
<gene>
    <name type="primary">Clic4</name>
</gene>